<sequence>MARFQEFYKEKVVPGLIEKFGYKSVMEVPRITKITLNMGLGEAIADKKIIENAVGDLTKIAGQKPVVTKARKAIAGFKIRQGYPIGAMVTLRGQAMYEFLDRFVTVALPRVRDFRGVSGRAFDGRGNYNIGVKEQIIFPEIDYDKIDALRGLNISITTTAKTDDEAKALLASFKFPFRN</sequence>
<dbReference type="EMBL" id="CP000378">
    <property type="protein sequence ID" value="ABF77645.1"/>
    <property type="molecule type" value="Genomic_DNA"/>
</dbReference>
<dbReference type="SMR" id="Q1BRW0"/>
<dbReference type="HOGENOM" id="CLU_061015_2_1_4"/>
<dbReference type="GO" id="GO:1990904">
    <property type="term" value="C:ribonucleoprotein complex"/>
    <property type="evidence" value="ECO:0007669"/>
    <property type="project" value="UniProtKB-KW"/>
</dbReference>
<dbReference type="GO" id="GO:0005840">
    <property type="term" value="C:ribosome"/>
    <property type="evidence" value="ECO:0007669"/>
    <property type="project" value="UniProtKB-KW"/>
</dbReference>
<dbReference type="GO" id="GO:0019843">
    <property type="term" value="F:rRNA binding"/>
    <property type="evidence" value="ECO:0007669"/>
    <property type="project" value="UniProtKB-UniRule"/>
</dbReference>
<dbReference type="GO" id="GO:0003735">
    <property type="term" value="F:structural constituent of ribosome"/>
    <property type="evidence" value="ECO:0007669"/>
    <property type="project" value="InterPro"/>
</dbReference>
<dbReference type="GO" id="GO:0000049">
    <property type="term" value="F:tRNA binding"/>
    <property type="evidence" value="ECO:0007669"/>
    <property type="project" value="UniProtKB-UniRule"/>
</dbReference>
<dbReference type="GO" id="GO:0006412">
    <property type="term" value="P:translation"/>
    <property type="evidence" value="ECO:0007669"/>
    <property type="project" value="UniProtKB-UniRule"/>
</dbReference>
<dbReference type="FunFam" id="3.30.1440.10:FF:000001">
    <property type="entry name" value="50S ribosomal protein L5"/>
    <property type="match status" value="1"/>
</dbReference>
<dbReference type="Gene3D" id="3.30.1440.10">
    <property type="match status" value="1"/>
</dbReference>
<dbReference type="HAMAP" id="MF_01333_B">
    <property type="entry name" value="Ribosomal_uL5_B"/>
    <property type="match status" value="1"/>
</dbReference>
<dbReference type="InterPro" id="IPR002132">
    <property type="entry name" value="Ribosomal_uL5"/>
</dbReference>
<dbReference type="InterPro" id="IPR020930">
    <property type="entry name" value="Ribosomal_uL5_bac-type"/>
</dbReference>
<dbReference type="InterPro" id="IPR031309">
    <property type="entry name" value="Ribosomal_uL5_C"/>
</dbReference>
<dbReference type="InterPro" id="IPR020929">
    <property type="entry name" value="Ribosomal_uL5_CS"/>
</dbReference>
<dbReference type="InterPro" id="IPR022803">
    <property type="entry name" value="Ribosomal_uL5_dom_sf"/>
</dbReference>
<dbReference type="InterPro" id="IPR031310">
    <property type="entry name" value="Ribosomal_uL5_N"/>
</dbReference>
<dbReference type="NCBIfam" id="NF000585">
    <property type="entry name" value="PRK00010.1"/>
    <property type="match status" value="1"/>
</dbReference>
<dbReference type="PANTHER" id="PTHR11994">
    <property type="entry name" value="60S RIBOSOMAL PROTEIN L11-RELATED"/>
    <property type="match status" value="1"/>
</dbReference>
<dbReference type="Pfam" id="PF00281">
    <property type="entry name" value="Ribosomal_L5"/>
    <property type="match status" value="1"/>
</dbReference>
<dbReference type="Pfam" id="PF00673">
    <property type="entry name" value="Ribosomal_L5_C"/>
    <property type="match status" value="1"/>
</dbReference>
<dbReference type="PIRSF" id="PIRSF002161">
    <property type="entry name" value="Ribosomal_L5"/>
    <property type="match status" value="1"/>
</dbReference>
<dbReference type="SUPFAM" id="SSF55282">
    <property type="entry name" value="RL5-like"/>
    <property type="match status" value="1"/>
</dbReference>
<dbReference type="PROSITE" id="PS00358">
    <property type="entry name" value="RIBOSOMAL_L5"/>
    <property type="match status" value="1"/>
</dbReference>
<comment type="function">
    <text evidence="1">This is one of the proteins that bind and probably mediate the attachment of the 5S RNA into the large ribosomal subunit, where it forms part of the central protuberance. In the 70S ribosome it contacts protein S13 of the 30S subunit (bridge B1b), connecting the 2 subunits; this bridge is implicated in subunit movement. Contacts the P site tRNA; the 5S rRNA and some of its associated proteins might help stabilize positioning of ribosome-bound tRNAs.</text>
</comment>
<comment type="subunit">
    <text evidence="1">Part of the 50S ribosomal subunit; part of the 5S rRNA/L5/L18/L25 subcomplex. Contacts the 5S rRNA and the P site tRNA. Forms a bridge to the 30S subunit in the 70S ribosome.</text>
</comment>
<comment type="similarity">
    <text evidence="1">Belongs to the universal ribosomal protein uL5 family.</text>
</comment>
<accession>Q1BRW0</accession>
<name>RL5_BURO1</name>
<keyword id="KW-0687">Ribonucleoprotein</keyword>
<keyword id="KW-0689">Ribosomal protein</keyword>
<keyword id="KW-0694">RNA-binding</keyword>
<keyword id="KW-0699">rRNA-binding</keyword>
<keyword id="KW-0820">tRNA-binding</keyword>
<reference key="1">
    <citation type="submission" date="2006-05" db="EMBL/GenBank/DDBJ databases">
        <title>Complete sequence of chromosome 1 of Burkholderia cenocepacia AU 1054.</title>
        <authorList>
            <consortium name="US DOE Joint Genome Institute"/>
            <person name="Copeland A."/>
            <person name="Lucas S."/>
            <person name="Lapidus A."/>
            <person name="Barry K."/>
            <person name="Detter J.C."/>
            <person name="Glavina del Rio T."/>
            <person name="Hammon N."/>
            <person name="Israni S."/>
            <person name="Dalin E."/>
            <person name="Tice H."/>
            <person name="Pitluck S."/>
            <person name="Chain P."/>
            <person name="Malfatti S."/>
            <person name="Shin M."/>
            <person name="Vergez L."/>
            <person name="Schmutz J."/>
            <person name="Larimer F."/>
            <person name="Land M."/>
            <person name="Hauser L."/>
            <person name="Kyrpides N."/>
            <person name="Lykidis A."/>
            <person name="LiPuma J.J."/>
            <person name="Konstantinidis K."/>
            <person name="Tiedje J.M."/>
            <person name="Richardson P."/>
        </authorList>
    </citation>
    <scope>NUCLEOTIDE SEQUENCE [LARGE SCALE GENOMIC DNA]</scope>
    <source>
        <strain>AU 1054</strain>
    </source>
</reference>
<gene>
    <name evidence="1" type="primary">rplE</name>
    <name type="ordered locus">Bcen_2747</name>
</gene>
<evidence type="ECO:0000255" key="1">
    <source>
        <dbReference type="HAMAP-Rule" id="MF_01333"/>
    </source>
</evidence>
<evidence type="ECO:0000305" key="2"/>
<protein>
    <recommendedName>
        <fullName evidence="1">Large ribosomal subunit protein uL5</fullName>
    </recommendedName>
    <alternativeName>
        <fullName evidence="2">50S ribosomal protein L5</fullName>
    </alternativeName>
</protein>
<proteinExistence type="inferred from homology"/>
<organism>
    <name type="scientific">Burkholderia orbicola (strain AU 1054)</name>
    <dbReference type="NCBI Taxonomy" id="331271"/>
    <lineage>
        <taxon>Bacteria</taxon>
        <taxon>Pseudomonadati</taxon>
        <taxon>Pseudomonadota</taxon>
        <taxon>Betaproteobacteria</taxon>
        <taxon>Burkholderiales</taxon>
        <taxon>Burkholderiaceae</taxon>
        <taxon>Burkholderia</taxon>
        <taxon>Burkholderia cepacia complex</taxon>
        <taxon>Burkholderia orbicola</taxon>
    </lineage>
</organism>
<feature type="chain" id="PRO_1000052701" description="Large ribosomal subunit protein uL5">
    <location>
        <begin position="1"/>
        <end position="179"/>
    </location>
</feature>